<proteinExistence type="evidence at protein level"/>
<evidence type="ECO:0000255" key="1">
    <source>
        <dbReference type="PROSITE-ProRule" id="PRU00056"/>
    </source>
</evidence>
<evidence type="ECO:0000255" key="2">
    <source>
        <dbReference type="PROSITE-ProRule" id="PRU00096"/>
    </source>
</evidence>
<evidence type="ECO:0000269" key="3">
    <source>
    </source>
</evidence>
<evidence type="ECO:0000303" key="4">
    <source>
    </source>
</evidence>
<evidence type="ECO:0000305" key="5"/>
<evidence type="ECO:0007829" key="6">
    <source>
        <dbReference type="PDB" id="4UYB"/>
    </source>
</evidence>
<gene>
    <name type="primary">SEC14L3</name>
    <name type="synonym">TAP2</name>
</gene>
<keyword id="KW-0002">3D-structure</keyword>
<keyword id="KW-0025">Alternative splicing</keyword>
<keyword id="KW-0446">Lipid-binding</keyword>
<keyword id="KW-1267">Proteomics identification</keyword>
<keyword id="KW-1185">Reference proteome</keyword>
<keyword id="KW-0813">Transport</keyword>
<dbReference type="EMBL" id="AY158086">
    <property type="protein sequence ID" value="AAO21870.1"/>
    <property type="molecule type" value="mRNA"/>
</dbReference>
<dbReference type="EMBL" id="AC004832">
    <property type="protein sequence ID" value="AAF19258.1"/>
    <property type="molecule type" value="Genomic_DNA"/>
</dbReference>
<dbReference type="EMBL" id="BC101001">
    <property type="protein sequence ID" value="AAI01002.1"/>
    <property type="molecule type" value="mRNA"/>
</dbReference>
<dbReference type="EMBL" id="BC101002">
    <property type="protein sequence ID" value="AAI01003.1"/>
    <property type="molecule type" value="mRNA"/>
</dbReference>
<dbReference type="EMBL" id="BC101004">
    <property type="protein sequence ID" value="AAI01005.1"/>
    <property type="molecule type" value="mRNA"/>
</dbReference>
<dbReference type="CCDS" id="CCDS13877.1">
    <molecule id="Q9UDX4-1"/>
</dbReference>
<dbReference type="CCDS" id="CCDS58800.1">
    <molecule id="Q9UDX4-3"/>
</dbReference>
<dbReference type="CCDS" id="CCDS58801.1">
    <molecule id="Q9UDX4-2"/>
</dbReference>
<dbReference type="RefSeq" id="NP_001244307.1">
    <molecule id="Q9UDX4-3"/>
    <property type="nucleotide sequence ID" value="NM_001257378.2"/>
</dbReference>
<dbReference type="RefSeq" id="NP_001244308.1">
    <molecule id="Q9UDX4-2"/>
    <property type="nucleotide sequence ID" value="NM_001257379.2"/>
</dbReference>
<dbReference type="RefSeq" id="NP_001244311.1">
    <molecule id="Q9UDX4-2"/>
    <property type="nucleotide sequence ID" value="NM_001257382.2"/>
</dbReference>
<dbReference type="RefSeq" id="NP_777635.1">
    <molecule id="Q9UDX4-1"/>
    <property type="nucleotide sequence ID" value="NM_174975.5"/>
</dbReference>
<dbReference type="PDB" id="4UYB">
    <property type="method" value="X-ray"/>
    <property type="resolution" value="1.50 A"/>
    <property type="chains" value="A=1-400"/>
</dbReference>
<dbReference type="PDBsum" id="4UYB"/>
<dbReference type="SMR" id="Q9UDX4"/>
<dbReference type="BioGRID" id="129297">
    <property type="interactions" value="6"/>
</dbReference>
<dbReference type="FunCoup" id="Q9UDX4">
    <property type="interactions" value="47"/>
</dbReference>
<dbReference type="IntAct" id="Q9UDX4">
    <property type="interactions" value="3"/>
</dbReference>
<dbReference type="STRING" id="9606.ENSP00000215812"/>
<dbReference type="DrugBank" id="DB14003">
    <property type="generic name" value="alpha-Tocopherol acetate"/>
</dbReference>
<dbReference type="DrugBank" id="DB14001">
    <property type="generic name" value="alpha-Tocopherol succinate"/>
</dbReference>
<dbReference type="DrugBank" id="DB14002">
    <property type="generic name" value="D-alpha-Tocopherol acetate"/>
</dbReference>
<dbReference type="DrugBank" id="DB11635">
    <property type="generic name" value="Tocofersolan"/>
</dbReference>
<dbReference type="DrugBank" id="DB11251">
    <property type="generic name" value="Tocopherol"/>
</dbReference>
<dbReference type="DrugBank" id="DB00163">
    <property type="generic name" value="Vitamin E"/>
</dbReference>
<dbReference type="iPTMnet" id="Q9UDX4"/>
<dbReference type="PhosphoSitePlus" id="Q9UDX4"/>
<dbReference type="SwissPalm" id="Q9UDX4"/>
<dbReference type="BioMuta" id="SEC14L3"/>
<dbReference type="DMDM" id="29428056"/>
<dbReference type="jPOST" id="Q9UDX4"/>
<dbReference type="MassIVE" id="Q9UDX4"/>
<dbReference type="PaxDb" id="9606-ENSP00000215812"/>
<dbReference type="PeptideAtlas" id="Q9UDX4"/>
<dbReference type="Antibodypedia" id="59073">
    <property type="antibodies" value="44 antibodies from 11 providers"/>
</dbReference>
<dbReference type="DNASU" id="266629"/>
<dbReference type="Ensembl" id="ENST00000215812.9">
    <molecule id="Q9UDX4-1"/>
    <property type="protein sequence ID" value="ENSP00000215812.5"/>
    <property type="gene ID" value="ENSG00000100012.12"/>
</dbReference>
<dbReference type="Ensembl" id="ENST00000401751.5">
    <molecule id="Q9UDX4-2"/>
    <property type="protein sequence ID" value="ENSP00000383896.1"/>
    <property type="gene ID" value="ENSG00000100012.12"/>
</dbReference>
<dbReference type="Ensembl" id="ENST00000402286.5">
    <molecule id="Q9UDX4-3"/>
    <property type="protein sequence ID" value="ENSP00000385004.1"/>
    <property type="gene ID" value="ENSG00000100012.12"/>
</dbReference>
<dbReference type="Ensembl" id="ENST00000540910.5">
    <molecule id="Q9UDX4-3"/>
    <property type="protein sequence ID" value="ENSP00000439752.1"/>
    <property type="gene ID" value="ENSG00000100012.12"/>
</dbReference>
<dbReference type="GeneID" id="266629"/>
<dbReference type="KEGG" id="hsa:266629"/>
<dbReference type="MANE-Select" id="ENST00000215812.9">
    <property type="protein sequence ID" value="ENSP00000215812.5"/>
    <property type="RefSeq nucleotide sequence ID" value="NM_174975.5"/>
    <property type="RefSeq protein sequence ID" value="NP_777635.1"/>
</dbReference>
<dbReference type="UCSC" id="uc003ahy.4">
    <molecule id="Q9UDX4-1"/>
    <property type="organism name" value="human"/>
</dbReference>
<dbReference type="AGR" id="HGNC:18655"/>
<dbReference type="CTD" id="266629"/>
<dbReference type="DisGeNET" id="266629"/>
<dbReference type="GeneCards" id="SEC14L3"/>
<dbReference type="HGNC" id="HGNC:18655">
    <property type="gene designation" value="SEC14L3"/>
</dbReference>
<dbReference type="HPA" id="ENSG00000100012">
    <property type="expression patterns" value="Tissue enhanced (bone marrow, liver, retina)"/>
</dbReference>
<dbReference type="MIM" id="612824">
    <property type="type" value="gene"/>
</dbReference>
<dbReference type="neXtProt" id="NX_Q9UDX4"/>
<dbReference type="OpenTargets" id="ENSG00000100012"/>
<dbReference type="PharmGKB" id="PA134960743"/>
<dbReference type="VEuPathDB" id="HostDB:ENSG00000100012"/>
<dbReference type="eggNOG" id="KOG1471">
    <property type="taxonomic scope" value="Eukaryota"/>
</dbReference>
<dbReference type="GeneTree" id="ENSGT00940000162077"/>
<dbReference type="HOGENOM" id="CLU_014001_2_1_1"/>
<dbReference type="InParanoid" id="Q9UDX4"/>
<dbReference type="OMA" id="WAFSTVW"/>
<dbReference type="OrthoDB" id="1434354at2759"/>
<dbReference type="PAN-GO" id="Q9UDX4">
    <property type="GO annotations" value="2 GO annotations based on evolutionary models"/>
</dbReference>
<dbReference type="PhylomeDB" id="Q9UDX4"/>
<dbReference type="TreeFam" id="TF313988"/>
<dbReference type="PathwayCommons" id="Q9UDX4"/>
<dbReference type="SignaLink" id="Q9UDX4"/>
<dbReference type="BioGRID-ORCS" id="266629">
    <property type="hits" value="11 hits in 1144 CRISPR screens"/>
</dbReference>
<dbReference type="EvolutionaryTrace" id="Q9UDX4"/>
<dbReference type="GenomeRNAi" id="266629"/>
<dbReference type="Pharos" id="Q9UDX4">
    <property type="development level" value="Tbio"/>
</dbReference>
<dbReference type="PRO" id="PR:Q9UDX4"/>
<dbReference type="Proteomes" id="UP000005640">
    <property type="component" value="Chromosome 22"/>
</dbReference>
<dbReference type="RNAct" id="Q9UDX4">
    <property type="molecule type" value="protein"/>
</dbReference>
<dbReference type="Bgee" id="ENSG00000100012">
    <property type="expression patterns" value="Expressed in olfactory segment of nasal mucosa and 36 other cell types or tissues"/>
</dbReference>
<dbReference type="ExpressionAtlas" id="Q9UDX4">
    <property type="expression patterns" value="baseline and differential"/>
</dbReference>
<dbReference type="GO" id="GO:0005737">
    <property type="term" value="C:cytoplasm"/>
    <property type="evidence" value="ECO:0000318"/>
    <property type="project" value="GO_Central"/>
</dbReference>
<dbReference type="GO" id="GO:0070062">
    <property type="term" value="C:extracellular exosome"/>
    <property type="evidence" value="ECO:0007005"/>
    <property type="project" value="UniProtKB"/>
</dbReference>
<dbReference type="GO" id="GO:0008289">
    <property type="term" value="F:lipid binding"/>
    <property type="evidence" value="ECO:0007669"/>
    <property type="project" value="UniProtKB-KW"/>
</dbReference>
<dbReference type="CDD" id="cd00170">
    <property type="entry name" value="SEC14"/>
    <property type="match status" value="1"/>
</dbReference>
<dbReference type="FunFam" id="3.40.525.10:FF:000009">
    <property type="entry name" value="SEC14-like 2 (S. cerevisiae)"/>
    <property type="match status" value="1"/>
</dbReference>
<dbReference type="FunFam" id="2.60.120.680:FF:000001">
    <property type="entry name" value="SEC14-like protein 2 isoform X1"/>
    <property type="match status" value="1"/>
</dbReference>
<dbReference type="Gene3D" id="3.40.525.10">
    <property type="entry name" value="CRAL-TRIO lipid binding domain"/>
    <property type="match status" value="1"/>
</dbReference>
<dbReference type="Gene3D" id="2.60.120.680">
    <property type="entry name" value="GOLD domain"/>
    <property type="match status" value="1"/>
</dbReference>
<dbReference type="InterPro" id="IPR001251">
    <property type="entry name" value="CRAL-TRIO_dom"/>
</dbReference>
<dbReference type="InterPro" id="IPR036865">
    <property type="entry name" value="CRAL-TRIO_dom_sf"/>
</dbReference>
<dbReference type="InterPro" id="IPR011074">
    <property type="entry name" value="CRAL/TRIO_N_dom"/>
</dbReference>
<dbReference type="InterPro" id="IPR036273">
    <property type="entry name" value="CRAL/TRIO_N_dom_sf"/>
</dbReference>
<dbReference type="InterPro" id="IPR009038">
    <property type="entry name" value="GOLD_dom"/>
</dbReference>
<dbReference type="InterPro" id="IPR036598">
    <property type="entry name" value="GOLD_dom_sf"/>
</dbReference>
<dbReference type="InterPro" id="IPR051064">
    <property type="entry name" value="SEC14/CRAL-TRIO_domain"/>
</dbReference>
<dbReference type="PANTHER" id="PTHR23324">
    <property type="entry name" value="SEC14 RELATED PROTEIN"/>
    <property type="match status" value="1"/>
</dbReference>
<dbReference type="PANTHER" id="PTHR23324:SF62">
    <property type="entry name" value="SEC14-LIKE PROTEIN 3"/>
    <property type="match status" value="1"/>
</dbReference>
<dbReference type="Pfam" id="PF00650">
    <property type="entry name" value="CRAL_TRIO"/>
    <property type="match status" value="1"/>
</dbReference>
<dbReference type="PRINTS" id="PR00180">
    <property type="entry name" value="CRETINALDHBP"/>
</dbReference>
<dbReference type="SMART" id="SM01100">
    <property type="entry name" value="CRAL_TRIO_N"/>
    <property type="match status" value="1"/>
</dbReference>
<dbReference type="SMART" id="SM00516">
    <property type="entry name" value="SEC14"/>
    <property type="match status" value="1"/>
</dbReference>
<dbReference type="SUPFAM" id="SSF52087">
    <property type="entry name" value="CRAL/TRIO domain"/>
    <property type="match status" value="1"/>
</dbReference>
<dbReference type="SUPFAM" id="SSF46938">
    <property type="entry name" value="CRAL/TRIO N-terminal domain"/>
    <property type="match status" value="1"/>
</dbReference>
<dbReference type="SUPFAM" id="SSF101576">
    <property type="entry name" value="Supernatant protein factor (SPF), C-terminal domain"/>
    <property type="match status" value="1"/>
</dbReference>
<dbReference type="PROSITE" id="PS50191">
    <property type="entry name" value="CRAL_TRIO"/>
    <property type="match status" value="1"/>
</dbReference>
<dbReference type="PROSITE" id="PS50866">
    <property type="entry name" value="GOLD"/>
    <property type="match status" value="1"/>
</dbReference>
<protein>
    <recommendedName>
        <fullName>SEC14-like protein 3</fullName>
    </recommendedName>
    <alternativeName>
        <fullName>Tocopherol-associated protein 2</fullName>
    </alternativeName>
</protein>
<accession>Q9UDX4</accession>
<accession>E7EN74</accession>
<accession>E9PE57</accession>
<accession>Q495V8</accession>
<accession>Q495W0</accession>
<accession>Q495W1</accession>
<name>S14L3_HUMAN</name>
<comment type="function">
    <text>Probable hydrophobic ligand-binding protein; may play a role in the transport of hydrophobic ligands like tocopherol, squalene and phospholipids.</text>
</comment>
<comment type="alternative products">
    <event type="alternative splicing"/>
    <isoform>
        <id>Q9UDX4-1</id>
        <name>1</name>
        <sequence type="displayed"/>
    </isoform>
    <isoform>
        <id>Q9UDX4-2</id>
        <name>2</name>
        <sequence type="described" ref="VSP_045554"/>
    </isoform>
    <isoform>
        <id>Q9UDX4-3</id>
        <name>3</name>
        <sequence type="described" ref="VSP_045553"/>
    </isoform>
</comment>
<organism>
    <name type="scientific">Homo sapiens</name>
    <name type="common">Human</name>
    <dbReference type="NCBI Taxonomy" id="9606"/>
    <lineage>
        <taxon>Eukaryota</taxon>
        <taxon>Metazoa</taxon>
        <taxon>Chordata</taxon>
        <taxon>Craniata</taxon>
        <taxon>Vertebrata</taxon>
        <taxon>Euteleostomi</taxon>
        <taxon>Mammalia</taxon>
        <taxon>Eutheria</taxon>
        <taxon>Euarchontoglires</taxon>
        <taxon>Primates</taxon>
        <taxon>Haplorrhini</taxon>
        <taxon>Catarrhini</taxon>
        <taxon>Hominidae</taxon>
        <taxon>Homo</taxon>
    </lineage>
</organism>
<sequence>MSGRVGDLSPKQAETLAKFRENVQDVLPALPNPDDYFLLRWLRARNFDLQKSEALLRKYMEFRKTMDIDHILDWQPPEVIQKYMPGGLCGYDRDGCPVWYDIIGPLDPKGLLFSVTKQDLLKTKMRDCERILHECDLQTERLGKKIETIVMIFDCEGLGLKHFWKPLVEVYQEFFGLLEENYPETLKFMLIVKATKLFPVGYNLMKPFLSEDTRRKIIVLGNNWKEGLLKLISPEELPAQFGGTLTDPDGNPKCLTKINYGGEIPKSMYVRDQVKTQYEHSVQINRGSSHQVEYEILFPGCVLRWQFSSDGADIGFGVFLKTKMGERQRAGEMTDVLPSQRYNAHMVPEDGNLTCSEAGVYVLRFDNTYSFVHAKKVSFTVEVLLPDEGMQKYDKELTPV</sequence>
<feature type="chain" id="PRO_0000210758" description="SEC14-like protein 3">
    <location>
        <begin position="1"/>
        <end position="400"/>
    </location>
</feature>
<feature type="domain" description="CRAL-TRIO" evidence="1">
    <location>
        <begin position="76"/>
        <end position="249"/>
    </location>
</feature>
<feature type="domain" description="GOLD" evidence="2">
    <location>
        <begin position="275"/>
        <end position="383"/>
    </location>
</feature>
<feature type="splice variant" id="VSP_045553" description="In isoform 3." evidence="5">
    <original>MSGRVGDLSPKQAETLAKFRENVQDVLPALPNPDDYFLLRWLRARNFDLQKSEALLRKYMEFRKTMDIDHILDWQPPE</original>
    <variation>M</variation>
    <location>
        <begin position="1"/>
        <end position="78"/>
    </location>
</feature>
<feature type="splice variant" id="VSP_045554" description="In isoform 2." evidence="4">
    <location>
        <begin position="1"/>
        <end position="59"/>
    </location>
</feature>
<feature type="sequence variant" id="VAR_024627" description="In dbSNP:rs4820853." evidence="3">
    <original>I</original>
    <variation>T</variation>
    <location>
        <position position="103"/>
    </location>
</feature>
<feature type="sequence variant" id="VAR_024628" description="In dbSNP:rs2269961.">
    <original>R</original>
    <variation>H</variation>
    <location>
        <position position="214"/>
    </location>
</feature>
<feature type="sequence variant" id="VAR_022097" description="In dbSNP:rs2240345." evidence="3">
    <original>D</original>
    <variation>E</variation>
    <location>
        <position position="335"/>
    </location>
</feature>
<feature type="sequence variant" id="VAR_061787" description="In dbSNP:rs35764129.">
    <original>R</original>
    <variation>C</variation>
    <location>
        <position position="364"/>
    </location>
</feature>
<feature type="helix" evidence="6">
    <location>
        <begin position="10"/>
        <end position="23"/>
    </location>
</feature>
<feature type="turn" evidence="6">
    <location>
        <begin position="24"/>
        <end position="26"/>
    </location>
</feature>
<feature type="helix" evidence="6">
    <location>
        <begin position="27"/>
        <end position="29"/>
    </location>
</feature>
<feature type="helix" evidence="6">
    <location>
        <begin position="35"/>
        <end position="44"/>
    </location>
</feature>
<feature type="turn" evidence="6">
    <location>
        <begin position="45"/>
        <end position="47"/>
    </location>
</feature>
<feature type="helix" evidence="6">
    <location>
        <begin position="49"/>
        <end position="65"/>
    </location>
</feature>
<feature type="helix" evidence="6">
    <location>
        <begin position="68"/>
        <end position="73"/>
    </location>
</feature>
<feature type="helix" evidence="6">
    <location>
        <begin position="78"/>
        <end position="83"/>
    </location>
</feature>
<feature type="strand" evidence="6">
    <location>
        <begin position="86"/>
        <end position="91"/>
    </location>
</feature>
<feature type="strand" evidence="6">
    <location>
        <begin position="97"/>
        <end position="102"/>
    </location>
</feature>
<feature type="helix" evidence="6">
    <location>
        <begin position="108"/>
        <end position="112"/>
    </location>
</feature>
<feature type="helix" evidence="6">
    <location>
        <begin position="117"/>
        <end position="142"/>
    </location>
</feature>
<feature type="strand" evidence="6">
    <location>
        <begin position="149"/>
        <end position="154"/>
    </location>
</feature>
<feature type="helix" evidence="6">
    <location>
        <begin position="160"/>
        <end position="163"/>
    </location>
</feature>
<feature type="helix" evidence="6">
    <location>
        <begin position="165"/>
        <end position="181"/>
    </location>
</feature>
<feature type="strand" evidence="6">
    <location>
        <begin position="186"/>
        <end position="193"/>
    </location>
</feature>
<feature type="helix" evidence="6">
    <location>
        <begin position="198"/>
        <end position="205"/>
    </location>
</feature>
<feature type="helix" evidence="6">
    <location>
        <begin position="206"/>
        <end position="208"/>
    </location>
</feature>
<feature type="helix" evidence="6">
    <location>
        <begin position="211"/>
        <end position="215"/>
    </location>
</feature>
<feature type="strand" evidence="6">
    <location>
        <begin position="217"/>
        <end position="219"/>
    </location>
</feature>
<feature type="helix" evidence="6">
    <location>
        <begin position="224"/>
        <end position="231"/>
    </location>
</feature>
<feature type="helix" evidence="6">
    <location>
        <begin position="234"/>
        <end position="236"/>
    </location>
</feature>
<feature type="helix" evidence="6">
    <location>
        <begin position="239"/>
        <end position="241"/>
    </location>
</feature>
<feature type="strand" evidence="6">
    <location>
        <begin position="243"/>
        <end position="245"/>
    </location>
</feature>
<feature type="turn" evidence="6">
    <location>
        <begin position="255"/>
        <end position="257"/>
    </location>
</feature>
<feature type="helix" evidence="6">
    <location>
        <begin position="266"/>
        <end position="268"/>
    </location>
</feature>
<feature type="strand" evidence="6">
    <location>
        <begin position="279"/>
        <end position="285"/>
    </location>
</feature>
<feature type="strand" evidence="6">
    <location>
        <begin position="289"/>
        <end position="296"/>
    </location>
</feature>
<feature type="strand" evidence="6">
    <location>
        <begin position="302"/>
        <end position="308"/>
    </location>
</feature>
<feature type="strand" evidence="6">
    <location>
        <begin position="310"/>
        <end position="312"/>
    </location>
</feature>
<feature type="strand" evidence="6">
    <location>
        <begin position="314"/>
        <end position="324"/>
    </location>
</feature>
<feature type="helix" evidence="6">
    <location>
        <begin position="330"/>
        <end position="332"/>
    </location>
</feature>
<feature type="strand" evidence="6">
    <location>
        <begin position="333"/>
        <end position="342"/>
    </location>
</feature>
<feature type="strand" evidence="6">
    <location>
        <begin position="345"/>
        <end position="347"/>
    </location>
</feature>
<feature type="strand" evidence="6">
    <location>
        <begin position="349"/>
        <end position="354"/>
    </location>
</feature>
<feature type="strand" evidence="6">
    <location>
        <begin position="359"/>
        <end position="366"/>
    </location>
</feature>
<feature type="strand" evidence="6">
    <location>
        <begin position="371"/>
        <end position="384"/>
    </location>
</feature>
<feature type="helix" evidence="6">
    <location>
        <begin position="388"/>
        <end position="391"/>
    </location>
</feature>
<feature type="helix" evidence="6">
    <location>
        <begin position="392"/>
        <end position="396"/>
    </location>
</feature>
<reference key="1">
    <citation type="journal article" date="2003" name="Free Radic. Biol. Med.">
        <title>Cloning of novel human SEC14p-like proteins: ligand binding and functional properties.</title>
        <authorList>
            <person name="Kempna P."/>
            <person name="Zingg J.-M."/>
            <person name="Ricciarelli R."/>
            <person name="Hierl M."/>
            <person name="Saxena S."/>
            <person name="Azzi A."/>
        </authorList>
    </citation>
    <scope>NUCLEOTIDE SEQUENCE [MRNA] (ISOFORM 1)</scope>
</reference>
<reference key="2">
    <citation type="journal article" date="1999" name="Nature">
        <title>The DNA sequence of human chromosome 22.</title>
        <authorList>
            <person name="Dunham I."/>
            <person name="Hunt A.R."/>
            <person name="Collins J.E."/>
            <person name="Bruskiewich R."/>
            <person name="Beare D.M."/>
            <person name="Clamp M."/>
            <person name="Smink L.J."/>
            <person name="Ainscough R."/>
            <person name="Almeida J.P."/>
            <person name="Babbage A.K."/>
            <person name="Bagguley C."/>
            <person name="Bailey J."/>
            <person name="Barlow K.F."/>
            <person name="Bates K.N."/>
            <person name="Beasley O.P."/>
            <person name="Bird C.P."/>
            <person name="Blakey S.E."/>
            <person name="Bridgeman A.M."/>
            <person name="Buck D."/>
            <person name="Burgess J."/>
            <person name="Burrill W.D."/>
            <person name="Burton J."/>
            <person name="Carder C."/>
            <person name="Carter N.P."/>
            <person name="Chen Y."/>
            <person name="Clark G."/>
            <person name="Clegg S.M."/>
            <person name="Cobley V.E."/>
            <person name="Cole C.G."/>
            <person name="Collier R.E."/>
            <person name="Connor R."/>
            <person name="Conroy D."/>
            <person name="Corby N.R."/>
            <person name="Coville G.J."/>
            <person name="Cox A.V."/>
            <person name="Davis J."/>
            <person name="Dawson E."/>
            <person name="Dhami P.D."/>
            <person name="Dockree C."/>
            <person name="Dodsworth S.J."/>
            <person name="Durbin R.M."/>
            <person name="Ellington A.G."/>
            <person name="Evans K.L."/>
            <person name="Fey J.M."/>
            <person name="Fleming K."/>
            <person name="French L."/>
            <person name="Garner A.A."/>
            <person name="Gilbert J.G.R."/>
            <person name="Goward M.E."/>
            <person name="Grafham D.V."/>
            <person name="Griffiths M.N.D."/>
            <person name="Hall C."/>
            <person name="Hall R.E."/>
            <person name="Hall-Tamlyn G."/>
            <person name="Heathcott R.W."/>
            <person name="Ho S."/>
            <person name="Holmes S."/>
            <person name="Hunt S.E."/>
            <person name="Jones M.C."/>
            <person name="Kershaw J."/>
            <person name="Kimberley A.M."/>
            <person name="King A."/>
            <person name="Laird G.K."/>
            <person name="Langford C.F."/>
            <person name="Leversha M.A."/>
            <person name="Lloyd C."/>
            <person name="Lloyd D.M."/>
            <person name="Martyn I.D."/>
            <person name="Mashreghi-Mohammadi M."/>
            <person name="Matthews L.H."/>
            <person name="Mccann O.T."/>
            <person name="Mcclay J."/>
            <person name="Mclaren S."/>
            <person name="McMurray A.A."/>
            <person name="Milne S.A."/>
            <person name="Mortimore B.J."/>
            <person name="Odell C.N."/>
            <person name="Pavitt R."/>
            <person name="Pearce A.V."/>
            <person name="Pearson D."/>
            <person name="Phillimore B.J.C.T."/>
            <person name="Phillips S.H."/>
            <person name="Plumb R.W."/>
            <person name="Ramsay H."/>
            <person name="Ramsey Y."/>
            <person name="Rogers L."/>
            <person name="Ross M.T."/>
            <person name="Scott C.E."/>
            <person name="Sehra H.K."/>
            <person name="Skuce C.D."/>
            <person name="Smalley S."/>
            <person name="Smith M.L."/>
            <person name="Soderlund C."/>
            <person name="Spragon L."/>
            <person name="Steward C.A."/>
            <person name="Sulston J.E."/>
            <person name="Swann R.M."/>
            <person name="Vaudin M."/>
            <person name="Wall M."/>
            <person name="Wallis J.M."/>
            <person name="Whiteley M.N."/>
            <person name="Willey D.L."/>
            <person name="Williams L."/>
            <person name="Williams S.A."/>
            <person name="Williamson H."/>
            <person name="Wilmer T.E."/>
            <person name="Wilming L."/>
            <person name="Wright C.L."/>
            <person name="Hubbard T."/>
            <person name="Bentley D.R."/>
            <person name="Beck S."/>
            <person name="Rogers J."/>
            <person name="Shimizu N."/>
            <person name="Minoshima S."/>
            <person name="Kawasaki K."/>
            <person name="Sasaki T."/>
            <person name="Asakawa S."/>
            <person name="Kudoh J."/>
            <person name="Shintani A."/>
            <person name="Shibuya K."/>
            <person name="Yoshizaki Y."/>
            <person name="Aoki N."/>
            <person name="Mitsuyama S."/>
            <person name="Roe B.A."/>
            <person name="Chen F."/>
            <person name="Chu L."/>
            <person name="Crabtree J."/>
            <person name="Deschamps S."/>
            <person name="Do A."/>
            <person name="Do T."/>
            <person name="Dorman A."/>
            <person name="Fang F."/>
            <person name="Fu Y."/>
            <person name="Hu P."/>
            <person name="Hua A."/>
            <person name="Kenton S."/>
            <person name="Lai H."/>
            <person name="Lao H.I."/>
            <person name="Lewis J."/>
            <person name="Lewis S."/>
            <person name="Lin S.-P."/>
            <person name="Loh P."/>
            <person name="Malaj E."/>
            <person name="Nguyen T."/>
            <person name="Pan H."/>
            <person name="Phan S."/>
            <person name="Qi S."/>
            <person name="Qian Y."/>
            <person name="Ray L."/>
            <person name="Ren Q."/>
            <person name="Shaull S."/>
            <person name="Sloan D."/>
            <person name="Song L."/>
            <person name="Wang Q."/>
            <person name="Wang Y."/>
            <person name="Wang Z."/>
            <person name="White J."/>
            <person name="Willingham D."/>
            <person name="Wu H."/>
            <person name="Yao Z."/>
            <person name="Zhan M."/>
            <person name="Zhang G."/>
            <person name="Chissoe S."/>
            <person name="Murray J."/>
            <person name="Miller N."/>
            <person name="Minx P."/>
            <person name="Fulton R."/>
            <person name="Johnson D."/>
            <person name="Bemis G."/>
            <person name="Bentley D."/>
            <person name="Bradshaw H."/>
            <person name="Bourne S."/>
            <person name="Cordes M."/>
            <person name="Du Z."/>
            <person name="Fulton L."/>
            <person name="Goela D."/>
            <person name="Graves T."/>
            <person name="Hawkins J."/>
            <person name="Hinds K."/>
            <person name="Kemp K."/>
            <person name="Latreille P."/>
            <person name="Layman D."/>
            <person name="Ozersky P."/>
            <person name="Rohlfing T."/>
            <person name="Scheet P."/>
            <person name="Walker C."/>
            <person name="Wamsley A."/>
            <person name="Wohldmann P."/>
            <person name="Pepin K."/>
            <person name="Nelson J."/>
            <person name="Korf I."/>
            <person name="Bedell J.A."/>
            <person name="Hillier L.W."/>
            <person name="Mardis E."/>
            <person name="Waterston R."/>
            <person name="Wilson R."/>
            <person name="Emanuel B.S."/>
            <person name="Shaikh T."/>
            <person name="Kurahashi H."/>
            <person name="Saitta S."/>
            <person name="Budarf M.L."/>
            <person name="McDermid H.E."/>
            <person name="Johnson A."/>
            <person name="Wong A.C.C."/>
            <person name="Morrow B.E."/>
            <person name="Edelmann L."/>
            <person name="Kim U.J."/>
            <person name="Shizuya H."/>
            <person name="Simon M.I."/>
            <person name="Dumanski J.P."/>
            <person name="Peyrard M."/>
            <person name="Kedra D."/>
            <person name="Seroussi E."/>
            <person name="Fransson I."/>
            <person name="Tapia I."/>
            <person name="Bruder C.E."/>
            <person name="O'Brien K.P."/>
            <person name="Wilkinson P."/>
            <person name="Bodenteich A."/>
            <person name="Hartman K."/>
            <person name="Hu X."/>
            <person name="Khan A.S."/>
            <person name="Lane L."/>
            <person name="Tilahun Y."/>
            <person name="Wright H."/>
        </authorList>
    </citation>
    <scope>NUCLEOTIDE SEQUENCE [LARGE SCALE GENOMIC DNA]</scope>
</reference>
<reference key="3">
    <citation type="journal article" date="2004" name="Genome Res.">
        <title>The status, quality, and expansion of the NIH full-length cDNA project: the Mammalian Gene Collection (MGC).</title>
        <authorList>
            <consortium name="The MGC Project Team"/>
        </authorList>
    </citation>
    <scope>NUCLEOTIDE SEQUENCE [LARGE SCALE MRNA] (ISOFORMS 1 AND 2)</scope>
    <scope>VARIANTS THR-103 AND GLU-335</scope>
</reference>